<keyword id="KW-0029">Amino-acid transport</keyword>
<keyword id="KW-0997">Cell inner membrane</keyword>
<keyword id="KW-1003">Cell membrane</keyword>
<keyword id="KW-0472">Membrane</keyword>
<keyword id="KW-0812">Transmembrane</keyword>
<keyword id="KW-1133">Transmembrane helix</keyword>
<keyword id="KW-0813">Transport</keyword>
<name>TUTB_ENTAG</name>
<organism>
    <name type="scientific">Enterobacter agglomerans</name>
    <name type="common">Erwinia herbicola</name>
    <name type="synonym">Pantoea agglomerans</name>
    <dbReference type="NCBI Taxonomy" id="549"/>
    <lineage>
        <taxon>Bacteria</taxon>
        <taxon>Pseudomonadati</taxon>
        <taxon>Pseudomonadota</taxon>
        <taxon>Gammaproteobacteria</taxon>
        <taxon>Enterobacterales</taxon>
        <taxon>Erwiniaceae</taxon>
        <taxon>Pantoea</taxon>
        <taxon>Pantoea agglomerans group</taxon>
    </lineage>
</organism>
<sequence>MVIKKTTPGLMSGTMLIIATVIGGGMFSLPIAMAGIWFPGASIILTLIAIMMLLTGLMLVEVNLHYGGGASFNTFTQDLLGHKWNVVVGIAFGFVLYILTYAYISGSSAVISQTVEKYSGFYLPARLSVIIVSVLVGGIAWYSSLLVGRITTVLIIGKFVAFFATFSGLIWHVEGAKLIDSAAWALPDTQYLPYILMTLPFCIISYGFHGNVPSLVKLYGTQGVKNITRSIFIGTAFALLLYIFWLVVTMGNISRADFSPIIAKGGNIDVFVEAIGGLFTSTSMDLILTFFGNFAVASSLLAATLGLFDYIADLFHFSDDRSGRFKTALVTYLPPAVVCFILPGGFVYAIGYAGLAFTIWSVILPPFLVKAARKRFPTAVYTAPCNNMILNLVIVVGGFVYLTVVLDVFRLLPSFS</sequence>
<feature type="chain" id="PRO_0000093803" description="Tyrosine permease">
    <location>
        <begin position="1"/>
        <end position="416"/>
    </location>
</feature>
<feature type="transmembrane region" description="Helical" evidence="1">
    <location>
        <begin position="13"/>
        <end position="33"/>
    </location>
</feature>
<feature type="transmembrane region" description="Helical" evidence="1">
    <location>
        <begin position="34"/>
        <end position="54"/>
    </location>
</feature>
<feature type="transmembrane region" description="Helical" evidence="1">
    <location>
        <begin position="86"/>
        <end position="106"/>
    </location>
</feature>
<feature type="transmembrane region" description="Helical" evidence="1">
    <location>
        <begin position="127"/>
        <end position="147"/>
    </location>
</feature>
<feature type="transmembrane region" description="Helical" evidence="1">
    <location>
        <begin position="153"/>
        <end position="173"/>
    </location>
</feature>
<feature type="transmembrane region" description="Helical" evidence="1">
    <location>
        <begin position="192"/>
        <end position="212"/>
    </location>
</feature>
<feature type="transmembrane region" description="Helical" evidence="1">
    <location>
        <begin position="231"/>
        <end position="251"/>
    </location>
</feature>
<feature type="transmembrane region" description="Helical" evidence="1">
    <location>
        <begin position="260"/>
        <end position="280"/>
    </location>
</feature>
<feature type="transmembrane region" description="Helical" evidence="1">
    <location>
        <begin position="286"/>
        <end position="306"/>
    </location>
</feature>
<feature type="transmembrane region" description="Helical" evidence="1">
    <location>
        <begin position="337"/>
        <end position="357"/>
    </location>
</feature>
<feature type="transmembrane region" description="Helical" evidence="1">
    <location>
        <begin position="389"/>
        <end position="409"/>
    </location>
</feature>
<gene>
    <name type="primary">tutB</name>
</gene>
<protein>
    <recommendedName>
        <fullName>Tyrosine permease</fullName>
    </recommendedName>
</protein>
<dbReference type="EMBL" id="U25347">
    <property type="protein sequence ID" value="AAA66391.1"/>
    <property type="molecule type" value="Genomic_DNA"/>
</dbReference>
<dbReference type="SMR" id="Q47825"/>
<dbReference type="TCDB" id="2.A.42.1.4">
    <property type="family name" value="the hydroxy/aromatic amino acid permease (haaap) family"/>
</dbReference>
<dbReference type="GO" id="GO:0005886">
    <property type="term" value="C:plasma membrane"/>
    <property type="evidence" value="ECO:0007669"/>
    <property type="project" value="UniProtKB-SubCell"/>
</dbReference>
<dbReference type="GO" id="GO:0015173">
    <property type="term" value="F:aromatic amino acid transmembrane transporter activity"/>
    <property type="evidence" value="ECO:0007669"/>
    <property type="project" value="InterPro"/>
</dbReference>
<dbReference type="GO" id="GO:0003333">
    <property type="term" value="P:amino acid transmembrane transport"/>
    <property type="evidence" value="ECO:0007669"/>
    <property type="project" value="InterPro"/>
</dbReference>
<dbReference type="Gene3D" id="1.20.1740.10">
    <property type="entry name" value="Amino acid/polyamine transporter I"/>
    <property type="match status" value="1"/>
</dbReference>
<dbReference type="InterPro" id="IPR018227">
    <property type="entry name" value="Amino_acid_transport_2"/>
</dbReference>
<dbReference type="InterPro" id="IPR013061">
    <property type="entry name" value="Trp/try_permease_CS"/>
</dbReference>
<dbReference type="InterPro" id="IPR013059">
    <property type="entry name" value="Trp_tyr_transpt"/>
</dbReference>
<dbReference type="NCBIfam" id="TIGR00837">
    <property type="entry name" value="araaP"/>
    <property type="match status" value="1"/>
</dbReference>
<dbReference type="PANTHER" id="PTHR46997">
    <property type="entry name" value="LOW AFFINITY TRYPTOPHAN PERMEASE-RELATED"/>
    <property type="match status" value="1"/>
</dbReference>
<dbReference type="PANTHER" id="PTHR46997:SF1">
    <property type="entry name" value="LOW AFFINITY TRYPTOPHAN PERMEASE-RELATED"/>
    <property type="match status" value="1"/>
</dbReference>
<dbReference type="Pfam" id="PF03222">
    <property type="entry name" value="Trp_Tyr_perm"/>
    <property type="match status" value="1"/>
</dbReference>
<dbReference type="PRINTS" id="PR00166">
    <property type="entry name" value="AROAAPRMEASE"/>
</dbReference>
<dbReference type="PROSITE" id="PS00594">
    <property type="entry name" value="AROMATIC_AA_PERMEASE_1"/>
    <property type="match status" value="1"/>
</dbReference>
<accession>Q47825</accession>
<comment type="subcellular location">
    <subcellularLocation>
        <location>Cell inner membrane</location>
        <topology>Multi-pass membrane protein</topology>
    </subcellularLocation>
</comment>
<comment type="similarity">
    <text evidence="2">Belongs to the amino acid/polyamine transporter 2 family. Mtr/TnaB/TyrP permease subfamily.</text>
</comment>
<proteinExistence type="inferred from homology"/>
<evidence type="ECO:0000255" key="1"/>
<evidence type="ECO:0000305" key="2"/>
<reference key="1">
    <citation type="submission" date="1995-05" db="EMBL/GenBank/DDBJ databases">
        <authorList>
            <person name="Foor F."/>
        </authorList>
    </citation>
    <scope>NUCLEOTIDE SEQUENCE [GENOMIC DNA]</scope>
    <source>
        <strain>ATCC 21434 / AJ 2985</strain>
    </source>
</reference>